<reference key="1">
    <citation type="submission" date="2003-03" db="EMBL/GenBank/DDBJ databases">
        <title>The complete genome sequence of Neisseria gonorrhoeae.</title>
        <authorList>
            <person name="Lewis L.A."/>
            <person name="Gillaspy A.F."/>
            <person name="McLaughlin R.E."/>
            <person name="Gipson M."/>
            <person name="Ducey T.F."/>
            <person name="Ownbey T."/>
            <person name="Hartman K."/>
            <person name="Nydick C."/>
            <person name="Carson M.B."/>
            <person name="Vaughn J."/>
            <person name="Thomson C."/>
            <person name="Song L."/>
            <person name="Lin S."/>
            <person name="Yuan X."/>
            <person name="Najar F."/>
            <person name="Zhan M."/>
            <person name="Ren Q."/>
            <person name="Zhu H."/>
            <person name="Qi S."/>
            <person name="Kenton S.M."/>
            <person name="Lai H."/>
            <person name="White J.D."/>
            <person name="Clifton S."/>
            <person name="Roe B.A."/>
            <person name="Dyer D.W."/>
        </authorList>
    </citation>
    <scope>NUCLEOTIDE SEQUENCE [LARGE SCALE GENOMIC DNA]</scope>
    <source>
        <strain>ATCC 700825 / FA 1090</strain>
    </source>
</reference>
<organism>
    <name type="scientific">Neisseria gonorrhoeae (strain ATCC 700825 / FA 1090)</name>
    <dbReference type="NCBI Taxonomy" id="242231"/>
    <lineage>
        <taxon>Bacteria</taxon>
        <taxon>Pseudomonadati</taxon>
        <taxon>Pseudomonadota</taxon>
        <taxon>Betaproteobacteria</taxon>
        <taxon>Neisseriales</taxon>
        <taxon>Neisseriaceae</taxon>
        <taxon>Neisseria</taxon>
    </lineage>
</organism>
<sequence length="156" mass="17645">MPRRREVPKRDVLPDPKFGSVELTKFMNVLMIDGKKSVAERIVYGALEQIEKKTGKAAIEVFNEAIANSKPIVEVKSRRVGGANYQVPVEVRPSRRLALAMRWVRDAARKRGEKSMDLRLAGELIDASEGRGGALKKREEVHRMAEANKAFSHFRF</sequence>
<evidence type="ECO:0000255" key="1">
    <source>
        <dbReference type="HAMAP-Rule" id="MF_00480"/>
    </source>
</evidence>
<evidence type="ECO:0000305" key="2"/>
<protein>
    <recommendedName>
        <fullName evidence="1">Small ribosomal subunit protein uS7</fullName>
    </recommendedName>
    <alternativeName>
        <fullName evidence="2">30S ribosomal protein S7</fullName>
    </alternativeName>
</protein>
<keyword id="KW-1185">Reference proteome</keyword>
<keyword id="KW-0687">Ribonucleoprotein</keyword>
<keyword id="KW-0689">Ribosomal protein</keyword>
<keyword id="KW-0694">RNA-binding</keyword>
<keyword id="KW-0699">rRNA-binding</keyword>
<keyword id="KW-0820">tRNA-binding</keyword>
<comment type="function">
    <text evidence="1">One of the primary rRNA binding proteins, it binds directly to 16S rRNA where it nucleates assembly of the head domain of the 30S subunit. Is located at the subunit interface close to the decoding center, probably blocks exit of the E-site tRNA.</text>
</comment>
<comment type="subunit">
    <text evidence="1">Part of the 30S ribosomal subunit. Contacts proteins S9 and S11.</text>
</comment>
<comment type="similarity">
    <text evidence="1">Belongs to the universal ribosomal protein uS7 family.</text>
</comment>
<proteinExistence type="inferred from homology"/>
<feature type="chain" id="PRO_0000226510" description="Small ribosomal subunit protein uS7">
    <location>
        <begin position="1"/>
        <end position="156"/>
    </location>
</feature>
<accession>Q5F5S2</accession>
<gene>
    <name evidence="1" type="primary">rpsG</name>
    <name type="ordered locus">NGO_1844</name>
</gene>
<name>RS7_NEIG1</name>
<dbReference type="EMBL" id="AE004969">
    <property type="protein sequence ID" value="AAW90465.1"/>
    <property type="molecule type" value="Genomic_DNA"/>
</dbReference>
<dbReference type="RefSeq" id="WP_003690099.1">
    <property type="nucleotide sequence ID" value="NC_002946.2"/>
</dbReference>
<dbReference type="RefSeq" id="YP_208877.1">
    <property type="nucleotide sequence ID" value="NC_002946.2"/>
</dbReference>
<dbReference type="SMR" id="Q5F5S2"/>
<dbReference type="STRING" id="242231.NGO_1844"/>
<dbReference type="GeneID" id="66754289"/>
<dbReference type="KEGG" id="ngo:NGO_1844"/>
<dbReference type="PATRIC" id="fig|242231.10.peg.2216"/>
<dbReference type="HOGENOM" id="CLU_072226_1_1_4"/>
<dbReference type="Proteomes" id="UP000000535">
    <property type="component" value="Chromosome"/>
</dbReference>
<dbReference type="GO" id="GO:0015935">
    <property type="term" value="C:small ribosomal subunit"/>
    <property type="evidence" value="ECO:0007669"/>
    <property type="project" value="InterPro"/>
</dbReference>
<dbReference type="GO" id="GO:0019843">
    <property type="term" value="F:rRNA binding"/>
    <property type="evidence" value="ECO:0007669"/>
    <property type="project" value="UniProtKB-UniRule"/>
</dbReference>
<dbReference type="GO" id="GO:0003735">
    <property type="term" value="F:structural constituent of ribosome"/>
    <property type="evidence" value="ECO:0007669"/>
    <property type="project" value="InterPro"/>
</dbReference>
<dbReference type="GO" id="GO:0000049">
    <property type="term" value="F:tRNA binding"/>
    <property type="evidence" value="ECO:0007669"/>
    <property type="project" value="UniProtKB-UniRule"/>
</dbReference>
<dbReference type="GO" id="GO:0006412">
    <property type="term" value="P:translation"/>
    <property type="evidence" value="ECO:0007669"/>
    <property type="project" value="UniProtKB-UniRule"/>
</dbReference>
<dbReference type="CDD" id="cd14869">
    <property type="entry name" value="uS7_Bacteria"/>
    <property type="match status" value="1"/>
</dbReference>
<dbReference type="FunFam" id="1.10.455.10:FF:000001">
    <property type="entry name" value="30S ribosomal protein S7"/>
    <property type="match status" value="1"/>
</dbReference>
<dbReference type="Gene3D" id="1.10.455.10">
    <property type="entry name" value="Ribosomal protein S7 domain"/>
    <property type="match status" value="1"/>
</dbReference>
<dbReference type="HAMAP" id="MF_00480_B">
    <property type="entry name" value="Ribosomal_uS7_B"/>
    <property type="match status" value="1"/>
</dbReference>
<dbReference type="InterPro" id="IPR000235">
    <property type="entry name" value="Ribosomal_uS7"/>
</dbReference>
<dbReference type="InterPro" id="IPR005717">
    <property type="entry name" value="Ribosomal_uS7_bac/org-type"/>
</dbReference>
<dbReference type="InterPro" id="IPR020606">
    <property type="entry name" value="Ribosomal_uS7_CS"/>
</dbReference>
<dbReference type="InterPro" id="IPR023798">
    <property type="entry name" value="Ribosomal_uS7_dom"/>
</dbReference>
<dbReference type="InterPro" id="IPR036823">
    <property type="entry name" value="Ribosomal_uS7_dom_sf"/>
</dbReference>
<dbReference type="NCBIfam" id="TIGR01029">
    <property type="entry name" value="rpsG_bact"/>
    <property type="match status" value="1"/>
</dbReference>
<dbReference type="PANTHER" id="PTHR11205">
    <property type="entry name" value="RIBOSOMAL PROTEIN S7"/>
    <property type="match status" value="1"/>
</dbReference>
<dbReference type="Pfam" id="PF00177">
    <property type="entry name" value="Ribosomal_S7"/>
    <property type="match status" value="1"/>
</dbReference>
<dbReference type="PIRSF" id="PIRSF002122">
    <property type="entry name" value="RPS7p_RPS7a_RPS5e_RPS7o"/>
    <property type="match status" value="1"/>
</dbReference>
<dbReference type="SUPFAM" id="SSF47973">
    <property type="entry name" value="Ribosomal protein S7"/>
    <property type="match status" value="1"/>
</dbReference>
<dbReference type="PROSITE" id="PS00052">
    <property type="entry name" value="RIBOSOMAL_S7"/>
    <property type="match status" value="1"/>
</dbReference>